<gene>
    <name type="primary">SRY</name>
    <name type="synonym">TDF</name>
</gene>
<sequence>MFGVLNSDNHCAAVQQGNILAFGRTSSELWTNNPTSNYRCETGGNRTDSGQSHIRRPMNAFMVWSRDQRRKVALENPQMQNSEISKQLGYQWKMLTEAEKRPFFEEAQRIQAMHREKYPDYKYRPRRKAVPQNSDKLLPAAFSSMLCRQGHVDERWYPFTCRGGRTRAAHSGTEDRLNSSQAANIVRSLLQQEHHCSSTSLRHNPETLAIQLSTDFYPK</sequence>
<name>SRY_ENHLU</name>
<reference key="1">
    <citation type="submission" date="2003-09" db="EMBL/GenBank/DDBJ databases">
        <title>A phylogeny of the pinnipeds from mitochondrial and single copy nuclear gene sequences.</title>
        <authorList>
            <person name="Kinnear M.W."/>
            <person name="Walker G."/>
            <person name="Amos W."/>
        </authorList>
    </citation>
    <scope>NUCLEOTIDE SEQUENCE [GENOMIC DNA]</scope>
</reference>
<protein>
    <recommendedName>
        <fullName>Sex-determining region Y protein</fullName>
    </recommendedName>
    <alternativeName>
        <fullName>Testis-determining factor</fullName>
    </alternativeName>
</protein>
<proteinExistence type="inferred from homology"/>
<accession>Q6TC27</accession>
<keyword id="KW-0010">Activator</keyword>
<keyword id="KW-0112">Calmodulin-binding</keyword>
<keyword id="KW-0963">Cytoplasm</keyword>
<keyword id="KW-0221">Differentiation</keyword>
<keyword id="KW-0238">DNA-binding</keyword>
<keyword id="KW-0539">Nucleus</keyword>
<keyword id="KW-0726">Sexual differentiation</keyword>
<keyword id="KW-0804">Transcription</keyword>
<keyword id="KW-0805">Transcription regulation</keyword>
<comment type="function">
    <text evidence="1 2">Transcriptional regulator that controls a genetic switch in male development. It is necessary and sufficient for initiating male sex determination by directing the development of supporting cell precursors (pre-Sertoli cells) as Sertoli rather than granulosa cells. Involved in different aspects of gene regulation including promoter activation or repression. Binds to the DNA consensus sequence 5'-[AT]AACAA[AT]-3'. SRY HMG box recognizes DNA by partial intercalation in the minor groove and promotes DNA bending. Also involved in pre-mRNA splicing (By similarity). In male adult brain involved in the maintenance of motor functions of dopaminergic neurons (By similarity).</text>
</comment>
<comment type="subunit">
    <text evidence="2">Interacts with CALM, EP300, HDAC3, KPNB1, ZNF208 isoform KRAB-O, PARP1, SLC9A3R2 and WT1. The interaction with EP300 modulates its DNA-binding activity. The interaction with KPNB1 is sensitive to dissociation by Ran in the GTP-bound form. Interaction with PARP1 impaired its DNA-binding activity.</text>
</comment>
<comment type="subcellular location">
    <subcellularLocation>
        <location evidence="2">Nucleus speckle</location>
    </subcellularLocation>
    <subcellularLocation>
        <location evidence="2">Cytoplasm</location>
    </subcellularLocation>
    <subcellularLocation>
        <location evidence="2">Nucleus</location>
    </subcellularLocation>
</comment>
<comment type="similarity">
    <text evidence="4">Belongs to the SRY family.</text>
</comment>
<comment type="online information" name="Protein Spotlight">
    <link uri="https://www.proteinspotlight.org/back_issues/080"/>
    <text>The tenuous nature of sex - Issue 80 of March 2007</text>
</comment>
<evidence type="ECO:0000250" key="1">
    <source>
        <dbReference type="UniProtKB" id="P36394"/>
    </source>
</evidence>
<evidence type="ECO:0000250" key="2">
    <source>
        <dbReference type="UniProtKB" id="Q05066"/>
    </source>
</evidence>
<evidence type="ECO:0000255" key="3">
    <source>
        <dbReference type="PROSITE-ProRule" id="PRU00267"/>
    </source>
</evidence>
<evidence type="ECO:0000305" key="4"/>
<dbReference type="EMBL" id="AY424668">
    <property type="protein sequence ID" value="AAR10379.1"/>
    <property type="molecule type" value="Genomic_DNA"/>
</dbReference>
<dbReference type="SMR" id="Q6TC27"/>
<dbReference type="GO" id="GO:0005737">
    <property type="term" value="C:cytoplasm"/>
    <property type="evidence" value="ECO:0007669"/>
    <property type="project" value="UniProtKB-SubCell"/>
</dbReference>
<dbReference type="GO" id="GO:0016607">
    <property type="term" value="C:nuclear speck"/>
    <property type="evidence" value="ECO:0007669"/>
    <property type="project" value="UniProtKB-SubCell"/>
</dbReference>
<dbReference type="GO" id="GO:0005634">
    <property type="term" value="C:nucleus"/>
    <property type="evidence" value="ECO:0000250"/>
    <property type="project" value="UniProtKB"/>
</dbReference>
<dbReference type="GO" id="GO:0005516">
    <property type="term" value="F:calmodulin binding"/>
    <property type="evidence" value="ECO:0007669"/>
    <property type="project" value="UniProtKB-KW"/>
</dbReference>
<dbReference type="GO" id="GO:0001228">
    <property type="term" value="F:DNA-binding transcription activator activity, RNA polymerase II-specific"/>
    <property type="evidence" value="ECO:0007669"/>
    <property type="project" value="TreeGrafter"/>
</dbReference>
<dbReference type="GO" id="GO:0000978">
    <property type="term" value="F:RNA polymerase II cis-regulatory region sequence-specific DNA binding"/>
    <property type="evidence" value="ECO:0007669"/>
    <property type="project" value="TreeGrafter"/>
</dbReference>
<dbReference type="GO" id="GO:0030154">
    <property type="term" value="P:cell differentiation"/>
    <property type="evidence" value="ECO:0007669"/>
    <property type="project" value="UniProtKB-KW"/>
</dbReference>
<dbReference type="GO" id="GO:0030238">
    <property type="term" value="P:male sex determination"/>
    <property type="evidence" value="ECO:0007669"/>
    <property type="project" value="InterPro"/>
</dbReference>
<dbReference type="GO" id="GO:0007548">
    <property type="term" value="P:sex differentiation"/>
    <property type="evidence" value="ECO:0007669"/>
    <property type="project" value="UniProtKB-KW"/>
</dbReference>
<dbReference type="CDD" id="cd22034">
    <property type="entry name" value="HMG-box_SoxA_SRY"/>
    <property type="match status" value="1"/>
</dbReference>
<dbReference type="FunFam" id="1.10.30.10:FF:000002">
    <property type="entry name" value="transcription factor Sox-2"/>
    <property type="match status" value="1"/>
</dbReference>
<dbReference type="Gene3D" id="1.10.30.10">
    <property type="entry name" value="High mobility group box domain"/>
    <property type="match status" value="1"/>
</dbReference>
<dbReference type="InterPro" id="IPR009071">
    <property type="entry name" value="HMG_box_dom"/>
</dbReference>
<dbReference type="InterPro" id="IPR036910">
    <property type="entry name" value="HMG_box_dom_sf"/>
</dbReference>
<dbReference type="InterPro" id="IPR017253">
    <property type="entry name" value="SRY"/>
</dbReference>
<dbReference type="InterPro" id="IPR050140">
    <property type="entry name" value="SRY-related_HMG-box_TF-like"/>
</dbReference>
<dbReference type="PANTHER" id="PTHR10270:SF161">
    <property type="entry name" value="SEX-DETERMINING REGION Y PROTEIN"/>
    <property type="match status" value="1"/>
</dbReference>
<dbReference type="PANTHER" id="PTHR10270">
    <property type="entry name" value="SOX TRANSCRIPTION FACTOR"/>
    <property type="match status" value="1"/>
</dbReference>
<dbReference type="Pfam" id="PF00505">
    <property type="entry name" value="HMG_box"/>
    <property type="match status" value="1"/>
</dbReference>
<dbReference type="PIRSF" id="PIRSF037653">
    <property type="entry name" value="SRY"/>
    <property type="match status" value="1"/>
</dbReference>
<dbReference type="SMART" id="SM00398">
    <property type="entry name" value="HMG"/>
    <property type="match status" value="1"/>
</dbReference>
<dbReference type="SUPFAM" id="SSF47095">
    <property type="entry name" value="HMG-box"/>
    <property type="match status" value="1"/>
</dbReference>
<dbReference type="PROSITE" id="PS50118">
    <property type="entry name" value="HMG_BOX_2"/>
    <property type="match status" value="1"/>
</dbReference>
<organism>
    <name type="scientific">Enhydra lutris</name>
    <name type="common">Sea otter</name>
    <dbReference type="NCBI Taxonomy" id="34882"/>
    <lineage>
        <taxon>Eukaryota</taxon>
        <taxon>Metazoa</taxon>
        <taxon>Chordata</taxon>
        <taxon>Craniata</taxon>
        <taxon>Vertebrata</taxon>
        <taxon>Euteleostomi</taxon>
        <taxon>Mammalia</taxon>
        <taxon>Eutheria</taxon>
        <taxon>Laurasiatheria</taxon>
        <taxon>Carnivora</taxon>
        <taxon>Caniformia</taxon>
        <taxon>Musteloidea</taxon>
        <taxon>Mustelidae</taxon>
        <taxon>Lutrinae</taxon>
        <taxon>Enhydra</taxon>
    </lineage>
</organism>
<feature type="chain" id="PRO_0000048661" description="Sex-determining region Y protein">
    <location>
        <begin position="1"/>
        <end position="219"/>
    </location>
</feature>
<feature type="DNA-binding region" description="HMG box" evidence="3">
    <location>
        <begin position="54"/>
        <end position="122"/>
    </location>
</feature>